<keyword id="KW-0963">Cytoplasm</keyword>
<keyword id="KW-0489">Methyltransferase</keyword>
<keyword id="KW-0698">rRNA processing</keyword>
<keyword id="KW-0949">S-adenosyl-L-methionine</keyword>
<keyword id="KW-0808">Transferase</keyword>
<comment type="function">
    <text evidence="1">Specifically methylates the pseudouridine at position 1915 (m3Psi1915) in 23S rRNA.</text>
</comment>
<comment type="catalytic activity">
    <reaction evidence="1">
        <text>pseudouridine(1915) in 23S rRNA + S-adenosyl-L-methionine = N(3)-methylpseudouridine(1915) in 23S rRNA + S-adenosyl-L-homocysteine + H(+)</text>
        <dbReference type="Rhea" id="RHEA:42752"/>
        <dbReference type="Rhea" id="RHEA-COMP:10221"/>
        <dbReference type="Rhea" id="RHEA-COMP:10222"/>
        <dbReference type="ChEBI" id="CHEBI:15378"/>
        <dbReference type="ChEBI" id="CHEBI:57856"/>
        <dbReference type="ChEBI" id="CHEBI:59789"/>
        <dbReference type="ChEBI" id="CHEBI:65314"/>
        <dbReference type="ChEBI" id="CHEBI:74486"/>
        <dbReference type="EC" id="2.1.1.177"/>
    </reaction>
</comment>
<comment type="subunit">
    <text evidence="1">Homodimer.</text>
</comment>
<comment type="subcellular location">
    <subcellularLocation>
        <location evidence="1">Cytoplasm</location>
    </subcellularLocation>
</comment>
<comment type="similarity">
    <text evidence="1">Belongs to the RNA methyltransferase RlmH family.</text>
</comment>
<dbReference type="EC" id="2.1.1.177" evidence="1"/>
<dbReference type="EMBL" id="CP000644">
    <property type="protein sequence ID" value="ABO89185.1"/>
    <property type="molecule type" value="Genomic_DNA"/>
</dbReference>
<dbReference type="RefSeq" id="WP_005317343.1">
    <property type="nucleotide sequence ID" value="NC_009348.1"/>
</dbReference>
<dbReference type="SMR" id="A4SJW3"/>
<dbReference type="STRING" id="29491.GCA_000820065_02575"/>
<dbReference type="KEGG" id="asa:ASA_1063"/>
<dbReference type="PATRIC" id="fig|382245.13.peg.1058"/>
<dbReference type="eggNOG" id="COG1576">
    <property type="taxonomic scope" value="Bacteria"/>
</dbReference>
<dbReference type="HOGENOM" id="CLU_100552_1_0_6"/>
<dbReference type="Proteomes" id="UP000000225">
    <property type="component" value="Chromosome"/>
</dbReference>
<dbReference type="GO" id="GO:0005737">
    <property type="term" value="C:cytoplasm"/>
    <property type="evidence" value="ECO:0007669"/>
    <property type="project" value="UniProtKB-SubCell"/>
</dbReference>
<dbReference type="GO" id="GO:0070038">
    <property type="term" value="F:rRNA (pseudouridine-N3-)-methyltransferase activity"/>
    <property type="evidence" value="ECO:0007669"/>
    <property type="project" value="UniProtKB-UniRule"/>
</dbReference>
<dbReference type="CDD" id="cd18081">
    <property type="entry name" value="RlmH-like"/>
    <property type="match status" value="1"/>
</dbReference>
<dbReference type="Gene3D" id="3.40.1280.10">
    <property type="match status" value="1"/>
</dbReference>
<dbReference type="HAMAP" id="MF_00658">
    <property type="entry name" value="23SrRNA_methyltr_H"/>
    <property type="match status" value="1"/>
</dbReference>
<dbReference type="InterPro" id="IPR029028">
    <property type="entry name" value="Alpha/beta_knot_MTases"/>
</dbReference>
<dbReference type="InterPro" id="IPR003742">
    <property type="entry name" value="RlmH-like"/>
</dbReference>
<dbReference type="InterPro" id="IPR029026">
    <property type="entry name" value="tRNA_m1G_MTases_N"/>
</dbReference>
<dbReference type="NCBIfam" id="NF000984">
    <property type="entry name" value="PRK00103.1-1"/>
    <property type="match status" value="1"/>
</dbReference>
<dbReference type="NCBIfam" id="NF000986">
    <property type="entry name" value="PRK00103.1-4"/>
    <property type="match status" value="1"/>
</dbReference>
<dbReference type="NCBIfam" id="TIGR00246">
    <property type="entry name" value="tRNA_RlmH_YbeA"/>
    <property type="match status" value="1"/>
</dbReference>
<dbReference type="PANTHER" id="PTHR33603">
    <property type="entry name" value="METHYLTRANSFERASE"/>
    <property type="match status" value="1"/>
</dbReference>
<dbReference type="PANTHER" id="PTHR33603:SF1">
    <property type="entry name" value="RIBOSOMAL RNA LARGE SUBUNIT METHYLTRANSFERASE H"/>
    <property type="match status" value="1"/>
</dbReference>
<dbReference type="Pfam" id="PF02590">
    <property type="entry name" value="SPOUT_MTase"/>
    <property type="match status" value="1"/>
</dbReference>
<dbReference type="PIRSF" id="PIRSF004505">
    <property type="entry name" value="MT_bac"/>
    <property type="match status" value="1"/>
</dbReference>
<dbReference type="SUPFAM" id="SSF75217">
    <property type="entry name" value="alpha/beta knot"/>
    <property type="match status" value="1"/>
</dbReference>
<name>RLMH_AERS4</name>
<gene>
    <name evidence="1" type="primary">rlmH</name>
    <name type="ordered locus">ASA_1063</name>
</gene>
<evidence type="ECO:0000255" key="1">
    <source>
        <dbReference type="HAMAP-Rule" id="MF_00658"/>
    </source>
</evidence>
<accession>A4SJW3</accession>
<protein>
    <recommendedName>
        <fullName evidence="1">Ribosomal RNA large subunit methyltransferase H</fullName>
        <ecNumber evidence="1">2.1.1.177</ecNumber>
    </recommendedName>
    <alternativeName>
        <fullName evidence="1">23S rRNA (pseudouridine1915-N3)-methyltransferase</fullName>
    </alternativeName>
    <alternativeName>
        <fullName evidence="1">23S rRNA m3Psi1915 methyltransferase</fullName>
    </alternativeName>
    <alternativeName>
        <fullName evidence="1">rRNA (pseudouridine-N3-)-methyltransferase RlmH</fullName>
    </alternativeName>
</protein>
<reference key="1">
    <citation type="journal article" date="2008" name="BMC Genomics">
        <title>The genome of Aeromonas salmonicida subsp. salmonicida A449: insights into the evolution of a fish pathogen.</title>
        <authorList>
            <person name="Reith M.E."/>
            <person name="Singh R.K."/>
            <person name="Curtis B."/>
            <person name="Boyd J.M."/>
            <person name="Bouevitch A."/>
            <person name="Kimball J."/>
            <person name="Munholland J."/>
            <person name="Murphy C."/>
            <person name="Sarty D."/>
            <person name="Williams J."/>
            <person name="Nash J.H."/>
            <person name="Johnson S.C."/>
            <person name="Brown L.L."/>
        </authorList>
    </citation>
    <scope>NUCLEOTIDE SEQUENCE [LARGE SCALE GENOMIC DNA]</scope>
    <source>
        <strain>A449</strain>
    </source>
</reference>
<feature type="chain" id="PRO_1000061752" description="Ribosomal RNA large subunit methyltransferase H">
    <location>
        <begin position="1"/>
        <end position="155"/>
    </location>
</feature>
<feature type="binding site" evidence="1">
    <location>
        <position position="72"/>
    </location>
    <ligand>
        <name>S-adenosyl-L-methionine</name>
        <dbReference type="ChEBI" id="CHEBI:59789"/>
    </ligand>
</feature>
<feature type="binding site" evidence="1">
    <location>
        <position position="103"/>
    </location>
    <ligand>
        <name>S-adenosyl-L-methionine</name>
        <dbReference type="ChEBI" id="CHEBI:59789"/>
    </ligand>
</feature>
<feature type="binding site" evidence="1">
    <location>
        <begin position="122"/>
        <end position="127"/>
    </location>
    <ligand>
        <name>S-adenosyl-L-methionine</name>
        <dbReference type="ChEBI" id="CHEBI:59789"/>
    </ligand>
</feature>
<sequence>MKIQLIAVGTKMPAWVERGFEEYRRRFPKDMPFELVEIGAGKRGKNADIPRILQKEGEAMLAAAGRSRLVTLDIPGKPWTTEQLAVQLEAWKLDGRDVALLVGGPEGLSPECKAAAEQSWSLSPLTLPHPLVRVLVAESLYRACSITTNHPYHRE</sequence>
<proteinExistence type="inferred from homology"/>
<organism>
    <name type="scientific">Aeromonas salmonicida (strain A449)</name>
    <dbReference type="NCBI Taxonomy" id="382245"/>
    <lineage>
        <taxon>Bacteria</taxon>
        <taxon>Pseudomonadati</taxon>
        <taxon>Pseudomonadota</taxon>
        <taxon>Gammaproteobacteria</taxon>
        <taxon>Aeromonadales</taxon>
        <taxon>Aeromonadaceae</taxon>
        <taxon>Aeromonas</taxon>
    </lineage>
</organism>